<sequence length="105" mass="11321">MSTLPRELVVWPIRCYQRFISPCLPPACRYVPTCSAYAAEAVLTHGVVRGLLLACRRLLRCHPWCAGGYDPVPPPRHSGCAVPGASATATARHATAQELSISHGK</sequence>
<comment type="function">
    <text evidence="1">Could be involved in insertion of integral membrane proteins into the membrane.</text>
</comment>
<comment type="subcellular location">
    <subcellularLocation>
        <location evidence="1">Cell inner membrane</location>
        <topology evidence="1">Peripheral membrane protein</topology>
        <orientation evidence="1">Cytoplasmic side</orientation>
    </subcellularLocation>
</comment>
<comment type="similarity">
    <text evidence="1">Belongs to the UPF0161 family.</text>
</comment>
<protein>
    <recommendedName>
        <fullName evidence="1">Putative membrane protein insertion efficiency factor</fullName>
    </recommendedName>
</protein>
<organism>
    <name type="scientific">Nitratidesulfovibrio vulgaris (strain DSM 19637 / Miyazaki F)</name>
    <name type="common">Desulfovibrio vulgaris</name>
    <dbReference type="NCBI Taxonomy" id="883"/>
    <lineage>
        <taxon>Bacteria</taxon>
        <taxon>Pseudomonadati</taxon>
        <taxon>Thermodesulfobacteriota</taxon>
        <taxon>Desulfovibrionia</taxon>
        <taxon>Desulfovibrionales</taxon>
        <taxon>Desulfovibrionaceae</taxon>
        <taxon>Nitratidesulfovibrio</taxon>
    </lineage>
</organism>
<evidence type="ECO:0000255" key="1">
    <source>
        <dbReference type="HAMAP-Rule" id="MF_00386"/>
    </source>
</evidence>
<name>YIDD_NITV9</name>
<dbReference type="EMBL" id="CP001197">
    <property type="protein sequence ID" value="ACL07844.1"/>
    <property type="molecule type" value="Genomic_DNA"/>
</dbReference>
<dbReference type="STRING" id="883.DvMF_0889"/>
<dbReference type="KEGG" id="dvm:DvMF_0889"/>
<dbReference type="eggNOG" id="COG0759">
    <property type="taxonomic scope" value="Bacteria"/>
</dbReference>
<dbReference type="HOGENOM" id="CLU_144811_2_1_7"/>
<dbReference type="OrthoDB" id="9801753at2"/>
<dbReference type="GO" id="GO:0005886">
    <property type="term" value="C:plasma membrane"/>
    <property type="evidence" value="ECO:0007669"/>
    <property type="project" value="UniProtKB-SubCell"/>
</dbReference>
<dbReference type="HAMAP" id="MF_00386">
    <property type="entry name" value="UPF0161_YidD"/>
    <property type="match status" value="1"/>
</dbReference>
<dbReference type="InterPro" id="IPR002696">
    <property type="entry name" value="Membr_insert_effic_factor_YidD"/>
</dbReference>
<dbReference type="NCBIfam" id="TIGR00278">
    <property type="entry name" value="membrane protein insertion efficiency factor YidD"/>
    <property type="match status" value="1"/>
</dbReference>
<dbReference type="PANTHER" id="PTHR33383">
    <property type="entry name" value="MEMBRANE PROTEIN INSERTION EFFICIENCY FACTOR-RELATED"/>
    <property type="match status" value="1"/>
</dbReference>
<dbReference type="PANTHER" id="PTHR33383:SF1">
    <property type="entry name" value="MEMBRANE PROTEIN INSERTION EFFICIENCY FACTOR-RELATED"/>
    <property type="match status" value="1"/>
</dbReference>
<dbReference type="Pfam" id="PF01809">
    <property type="entry name" value="YidD"/>
    <property type="match status" value="1"/>
</dbReference>
<dbReference type="SMART" id="SM01234">
    <property type="entry name" value="Haemolytic"/>
    <property type="match status" value="1"/>
</dbReference>
<keyword id="KW-0997">Cell inner membrane</keyword>
<keyword id="KW-1003">Cell membrane</keyword>
<keyword id="KW-0472">Membrane</keyword>
<gene>
    <name type="ordered locus">DvMF_0889</name>
</gene>
<accession>B8DP12</accession>
<reference key="1">
    <citation type="submission" date="2008-10" db="EMBL/GenBank/DDBJ databases">
        <title>Complete sequence of Desulfovibrio vulgaris str. 'Miyazaki F'.</title>
        <authorList>
            <person name="Lucas S."/>
            <person name="Copeland A."/>
            <person name="Lapidus A."/>
            <person name="Glavina del Rio T."/>
            <person name="Dalin E."/>
            <person name="Tice H."/>
            <person name="Bruce D."/>
            <person name="Goodwin L."/>
            <person name="Pitluck S."/>
            <person name="Sims D."/>
            <person name="Brettin T."/>
            <person name="Detter J.C."/>
            <person name="Han C."/>
            <person name="Larimer F."/>
            <person name="Land M."/>
            <person name="Hauser L."/>
            <person name="Kyrpides N."/>
            <person name="Mikhailova N."/>
            <person name="Hazen T.C."/>
            <person name="Richardson P."/>
        </authorList>
    </citation>
    <scope>NUCLEOTIDE SEQUENCE [LARGE SCALE GENOMIC DNA]</scope>
    <source>
        <strain>DSM 19637 / Miyazaki F</strain>
    </source>
</reference>
<proteinExistence type="inferred from homology"/>
<feature type="chain" id="PRO_1000122635" description="Putative membrane protein insertion efficiency factor">
    <location>
        <begin position="1"/>
        <end position="105"/>
    </location>
</feature>